<gene>
    <name evidence="1" type="primary">ruvB</name>
    <name type="ordered locus">FTF1013c</name>
</gene>
<accession>Q14HJ6</accession>
<proteinExistence type="inferred from homology"/>
<sequence>MIETDRIISANTAQTNDENVIDRAIRPKTLAEYEGQPAVREQMEIFIQAAKARKDALDHTLIFGPPGLGKTTLSNIIANEMGVELKQTSGPVLEKAGDLAALLTNLEENDVLFIDEIHRLSPVVEEILYPAMEDYQLDIMIGEGPAARSIKIDLPPFTLVGATTRAGLLTSPLRDRFGIIQRLEFYSIDDLSKIVYRSAKLLNLDITTDGAMEIAKRSRGTPRIANRLLRRVRDYAQVKGSGVICFEIADKALSMLKVDPVGFDHMDHRYLLTLMEKFAGGPVGLDTMSAALSEEKGTIEDVIEPYLIQQGYIMRTARGRIATLLAYNHFKLKIPDNLSADQQQTLSI</sequence>
<dbReference type="EC" id="3.6.4.-" evidence="1"/>
<dbReference type="EMBL" id="AM286280">
    <property type="protein sequence ID" value="CAL09029.1"/>
    <property type="molecule type" value="Genomic_DNA"/>
</dbReference>
<dbReference type="RefSeq" id="WP_003016007.1">
    <property type="nucleotide sequence ID" value="NC_008245.1"/>
</dbReference>
<dbReference type="SMR" id="Q14HJ6"/>
<dbReference type="KEGG" id="ftf:FTF1013c"/>
<dbReference type="HOGENOM" id="CLU_055599_1_0_6"/>
<dbReference type="GO" id="GO:0005737">
    <property type="term" value="C:cytoplasm"/>
    <property type="evidence" value="ECO:0007669"/>
    <property type="project" value="UniProtKB-SubCell"/>
</dbReference>
<dbReference type="GO" id="GO:0048476">
    <property type="term" value="C:Holliday junction resolvase complex"/>
    <property type="evidence" value="ECO:0007669"/>
    <property type="project" value="UniProtKB-UniRule"/>
</dbReference>
<dbReference type="GO" id="GO:0005524">
    <property type="term" value="F:ATP binding"/>
    <property type="evidence" value="ECO:0007669"/>
    <property type="project" value="UniProtKB-UniRule"/>
</dbReference>
<dbReference type="GO" id="GO:0016887">
    <property type="term" value="F:ATP hydrolysis activity"/>
    <property type="evidence" value="ECO:0007669"/>
    <property type="project" value="InterPro"/>
</dbReference>
<dbReference type="GO" id="GO:0000400">
    <property type="term" value="F:four-way junction DNA binding"/>
    <property type="evidence" value="ECO:0007669"/>
    <property type="project" value="UniProtKB-UniRule"/>
</dbReference>
<dbReference type="GO" id="GO:0009378">
    <property type="term" value="F:four-way junction helicase activity"/>
    <property type="evidence" value="ECO:0007669"/>
    <property type="project" value="InterPro"/>
</dbReference>
<dbReference type="GO" id="GO:0006310">
    <property type="term" value="P:DNA recombination"/>
    <property type="evidence" value="ECO:0007669"/>
    <property type="project" value="UniProtKB-UniRule"/>
</dbReference>
<dbReference type="GO" id="GO:0006281">
    <property type="term" value="P:DNA repair"/>
    <property type="evidence" value="ECO:0007669"/>
    <property type="project" value="UniProtKB-UniRule"/>
</dbReference>
<dbReference type="CDD" id="cd00009">
    <property type="entry name" value="AAA"/>
    <property type="match status" value="1"/>
</dbReference>
<dbReference type="FunFam" id="1.10.8.60:FF:000023">
    <property type="entry name" value="Holliday junction ATP-dependent DNA helicase RuvB"/>
    <property type="match status" value="1"/>
</dbReference>
<dbReference type="FunFam" id="3.40.50.300:FF:000073">
    <property type="entry name" value="Holliday junction ATP-dependent DNA helicase RuvB"/>
    <property type="match status" value="1"/>
</dbReference>
<dbReference type="Gene3D" id="1.10.8.60">
    <property type="match status" value="1"/>
</dbReference>
<dbReference type="Gene3D" id="3.40.50.300">
    <property type="entry name" value="P-loop containing nucleotide triphosphate hydrolases"/>
    <property type="match status" value="1"/>
</dbReference>
<dbReference type="Gene3D" id="1.10.10.10">
    <property type="entry name" value="Winged helix-like DNA-binding domain superfamily/Winged helix DNA-binding domain"/>
    <property type="match status" value="1"/>
</dbReference>
<dbReference type="HAMAP" id="MF_00016">
    <property type="entry name" value="DNA_HJ_migration_RuvB"/>
    <property type="match status" value="1"/>
</dbReference>
<dbReference type="InterPro" id="IPR003593">
    <property type="entry name" value="AAA+_ATPase"/>
</dbReference>
<dbReference type="InterPro" id="IPR041445">
    <property type="entry name" value="AAA_lid_4"/>
</dbReference>
<dbReference type="InterPro" id="IPR004605">
    <property type="entry name" value="DNA_helicase_Holl-junc_RuvB"/>
</dbReference>
<dbReference type="InterPro" id="IPR027417">
    <property type="entry name" value="P-loop_NTPase"/>
</dbReference>
<dbReference type="InterPro" id="IPR008824">
    <property type="entry name" value="RuvB-like_N"/>
</dbReference>
<dbReference type="InterPro" id="IPR008823">
    <property type="entry name" value="RuvB_C"/>
</dbReference>
<dbReference type="InterPro" id="IPR036388">
    <property type="entry name" value="WH-like_DNA-bd_sf"/>
</dbReference>
<dbReference type="InterPro" id="IPR036390">
    <property type="entry name" value="WH_DNA-bd_sf"/>
</dbReference>
<dbReference type="NCBIfam" id="NF000868">
    <property type="entry name" value="PRK00080.1"/>
    <property type="match status" value="1"/>
</dbReference>
<dbReference type="NCBIfam" id="TIGR00635">
    <property type="entry name" value="ruvB"/>
    <property type="match status" value="1"/>
</dbReference>
<dbReference type="PANTHER" id="PTHR42848">
    <property type="match status" value="1"/>
</dbReference>
<dbReference type="PANTHER" id="PTHR42848:SF1">
    <property type="entry name" value="HOLLIDAY JUNCTION BRANCH MIGRATION COMPLEX SUBUNIT RUVB"/>
    <property type="match status" value="1"/>
</dbReference>
<dbReference type="Pfam" id="PF17864">
    <property type="entry name" value="AAA_lid_4"/>
    <property type="match status" value="1"/>
</dbReference>
<dbReference type="Pfam" id="PF05491">
    <property type="entry name" value="RuvB_C"/>
    <property type="match status" value="1"/>
</dbReference>
<dbReference type="Pfam" id="PF05496">
    <property type="entry name" value="RuvB_N"/>
    <property type="match status" value="1"/>
</dbReference>
<dbReference type="SMART" id="SM00382">
    <property type="entry name" value="AAA"/>
    <property type="match status" value="1"/>
</dbReference>
<dbReference type="SUPFAM" id="SSF52540">
    <property type="entry name" value="P-loop containing nucleoside triphosphate hydrolases"/>
    <property type="match status" value="1"/>
</dbReference>
<dbReference type="SUPFAM" id="SSF46785">
    <property type="entry name" value="Winged helix' DNA-binding domain"/>
    <property type="match status" value="1"/>
</dbReference>
<evidence type="ECO:0000255" key="1">
    <source>
        <dbReference type="HAMAP-Rule" id="MF_00016"/>
    </source>
</evidence>
<organism>
    <name type="scientific">Francisella tularensis subsp. tularensis (strain FSC 198)</name>
    <dbReference type="NCBI Taxonomy" id="393115"/>
    <lineage>
        <taxon>Bacteria</taxon>
        <taxon>Pseudomonadati</taxon>
        <taxon>Pseudomonadota</taxon>
        <taxon>Gammaproteobacteria</taxon>
        <taxon>Thiotrichales</taxon>
        <taxon>Francisellaceae</taxon>
        <taxon>Francisella</taxon>
    </lineage>
</organism>
<protein>
    <recommendedName>
        <fullName evidence="1">Holliday junction branch migration complex subunit RuvB</fullName>
        <ecNumber evidence="1">3.6.4.-</ecNumber>
    </recommendedName>
</protein>
<keyword id="KW-0067">ATP-binding</keyword>
<keyword id="KW-0963">Cytoplasm</keyword>
<keyword id="KW-0227">DNA damage</keyword>
<keyword id="KW-0233">DNA recombination</keyword>
<keyword id="KW-0234">DNA repair</keyword>
<keyword id="KW-0238">DNA-binding</keyword>
<keyword id="KW-0378">Hydrolase</keyword>
<keyword id="KW-0547">Nucleotide-binding</keyword>
<reference key="1">
    <citation type="journal article" date="2007" name="PLoS ONE">
        <title>Genome sequencing shows that European isolates of Francisella tularensis subspecies tularensis are almost identical to US laboratory strain Schu S4.</title>
        <authorList>
            <person name="Chaudhuri R.R."/>
            <person name="Ren C.-P."/>
            <person name="Desmond L."/>
            <person name="Vincent G.A."/>
            <person name="Silman N.J."/>
            <person name="Brehm J.K."/>
            <person name="Elmore M.J."/>
            <person name="Hudson M.J."/>
            <person name="Forsman M."/>
            <person name="Isherwood K.E."/>
            <person name="Gurycova D."/>
            <person name="Minton N.P."/>
            <person name="Titball R.W."/>
            <person name="Pallen M.J."/>
            <person name="Vipond R."/>
        </authorList>
    </citation>
    <scope>NUCLEOTIDE SEQUENCE [LARGE SCALE GENOMIC DNA]</scope>
    <source>
        <strain>FSC 198</strain>
    </source>
</reference>
<name>RUVB_FRAT1</name>
<feature type="chain" id="PRO_1000001406" description="Holliday junction branch migration complex subunit RuvB">
    <location>
        <begin position="1"/>
        <end position="348"/>
    </location>
</feature>
<feature type="region of interest" description="Large ATPase domain (RuvB-L)" evidence="1">
    <location>
        <begin position="4"/>
        <end position="186"/>
    </location>
</feature>
<feature type="region of interest" description="Small ATPAse domain (RuvB-S)" evidence="1">
    <location>
        <begin position="187"/>
        <end position="257"/>
    </location>
</feature>
<feature type="region of interest" description="Head domain (RuvB-H)" evidence="1">
    <location>
        <begin position="260"/>
        <end position="348"/>
    </location>
</feature>
<feature type="binding site" evidence="1">
    <location>
        <position position="25"/>
    </location>
    <ligand>
        <name>ATP</name>
        <dbReference type="ChEBI" id="CHEBI:30616"/>
    </ligand>
</feature>
<feature type="binding site" evidence="1">
    <location>
        <position position="26"/>
    </location>
    <ligand>
        <name>ATP</name>
        <dbReference type="ChEBI" id="CHEBI:30616"/>
    </ligand>
</feature>
<feature type="binding site" evidence="1">
    <location>
        <position position="67"/>
    </location>
    <ligand>
        <name>ATP</name>
        <dbReference type="ChEBI" id="CHEBI:30616"/>
    </ligand>
</feature>
<feature type="binding site" evidence="1">
    <location>
        <position position="70"/>
    </location>
    <ligand>
        <name>ATP</name>
        <dbReference type="ChEBI" id="CHEBI:30616"/>
    </ligand>
</feature>
<feature type="binding site" evidence="1">
    <location>
        <position position="71"/>
    </location>
    <ligand>
        <name>ATP</name>
        <dbReference type="ChEBI" id="CHEBI:30616"/>
    </ligand>
</feature>
<feature type="binding site" evidence="1">
    <location>
        <position position="71"/>
    </location>
    <ligand>
        <name>Mg(2+)</name>
        <dbReference type="ChEBI" id="CHEBI:18420"/>
    </ligand>
</feature>
<feature type="binding site" evidence="1">
    <location>
        <position position="72"/>
    </location>
    <ligand>
        <name>ATP</name>
        <dbReference type="ChEBI" id="CHEBI:30616"/>
    </ligand>
</feature>
<feature type="binding site" evidence="1">
    <location>
        <begin position="133"/>
        <end position="135"/>
    </location>
    <ligand>
        <name>ATP</name>
        <dbReference type="ChEBI" id="CHEBI:30616"/>
    </ligand>
</feature>
<feature type="binding site" evidence="1">
    <location>
        <position position="176"/>
    </location>
    <ligand>
        <name>ATP</name>
        <dbReference type="ChEBI" id="CHEBI:30616"/>
    </ligand>
</feature>
<feature type="binding site" evidence="1">
    <location>
        <position position="186"/>
    </location>
    <ligand>
        <name>ATP</name>
        <dbReference type="ChEBI" id="CHEBI:30616"/>
    </ligand>
</feature>
<feature type="binding site" evidence="1">
    <location>
        <position position="223"/>
    </location>
    <ligand>
        <name>ATP</name>
        <dbReference type="ChEBI" id="CHEBI:30616"/>
    </ligand>
</feature>
<feature type="binding site" evidence="1">
    <location>
        <position position="315"/>
    </location>
    <ligand>
        <name>DNA</name>
        <dbReference type="ChEBI" id="CHEBI:16991"/>
    </ligand>
</feature>
<feature type="binding site" evidence="1">
    <location>
        <position position="320"/>
    </location>
    <ligand>
        <name>DNA</name>
        <dbReference type="ChEBI" id="CHEBI:16991"/>
    </ligand>
</feature>
<comment type="function">
    <text evidence="1">The RuvA-RuvB-RuvC complex processes Holliday junction (HJ) DNA during genetic recombination and DNA repair, while the RuvA-RuvB complex plays an important role in the rescue of blocked DNA replication forks via replication fork reversal (RFR). RuvA specifically binds to HJ cruciform DNA, conferring on it an open structure. The RuvB hexamer acts as an ATP-dependent pump, pulling dsDNA into and through the RuvAB complex. RuvB forms 2 homohexamers on either side of HJ DNA bound by 1 or 2 RuvA tetramers; 4 subunits per hexamer contact DNA at a time. Coordinated motions by a converter formed by DNA-disengaged RuvB subunits stimulates ATP hydrolysis and nucleotide exchange. Immobilization of the converter enables RuvB to convert the ATP-contained energy into a lever motion, pulling 2 nucleotides of DNA out of the RuvA tetramer per ATP hydrolyzed, thus driving DNA branch migration. The RuvB motors rotate together with the DNA substrate, which together with the progressing nucleotide cycle form the mechanistic basis for DNA recombination by continuous HJ branch migration. Branch migration allows RuvC to scan DNA until it finds its consensus sequence, where it cleaves and resolves cruciform DNA.</text>
</comment>
<comment type="catalytic activity">
    <reaction evidence="1">
        <text>ATP + H2O = ADP + phosphate + H(+)</text>
        <dbReference type="Rhea" id="RHEA:13065"/>
        <dbReference type="ChEBI" id="CHEBI:15377"/>
        <dbReference type="ChEBI" id="CHEBI:15378"/>
        <dbReference type="ChEBI" id="CHEBI:30616"/>
        <dbReference type="ChEBI" id="CHEBI:43474"/>
        <dbReference type="ChEBI" id="CHEBI:456216"/>
    </reaction>
</comment>
<comment type="subunit">
    <text evidence="1">Homohexamer. Forms an RuvA(8)-RuvB(12)-Holliday junction (HJ) complex. HJ DNA is sandwiched between 2 RuvA tetramers; dsDNA enters through RuvA and exits via RuvB. An RuvB hexamer assembles on each DNA strand where it exits the tetramer. Each RuvB hexamer is contacted by two RuvA subunits (via domain III) on 2 adjacent RuvB subunits; this complex drives branch migration. In the full resolvosome a probable DNA-RuvA(4)-RuvB(12)-RuvC(2) complex forms which resolves the HJ.</text>
</comment>
<comment type="subcellular location">
    <subcellularLocation>
        <location evidence="1">Cytoplasm</location>
    </subcellularLocation>
</comment>
<comment type="domain">
    <text evidence="1">Has 3 domains, the large (RuvB-L) and small ATPase (RuvB-S) domains and the C-terminal head (RuvB-H) domain. The head domain binds DNA, while the ATPase domains jointly bind ATP, ADP or are empty depending on the state of the subunit in the translocation cycle. During a single DNA translocation step the structure of each domain remains the same, but their relative positions change.</text>
</comment>
<comment type="similarity">
    <text evidence="1">Belongs to the RuvB family.</text>
</comment>